<reference key="1">
    <citation type="journal article" date="1998" name="Dev. Dyn.">
        <title>Bodenin: a novel murine gene expressed in restricted areas of the brain.</title>
        <authorList>
            <person name="Faisst A.M."/>
            <person name="Gruss P."/>
        </authorList>
    </citation>
    <scope>NUCLEOTIDE SEQUENCE [MRNA]</scope>
    <source>
        <strain>BALB/cJ</strain>
    </source>
</reference>
<reference key="2">
    <citation type="journal article" date="2005" name="Science">
        <title>The transcriptional landscape of the mammalian genome.</title>
        <authorList>
            <person name="Carninci P."/>
            <person name="Kasukawa T."/>
            <person name="Katayama S."/>
            <person name="Gough J."/>
            <person name="Frith M.C."/>
            <person name="Maeda N."/>
            <person name="Oyama R."/>
            <person name="Ravasi T."/>
            <person name="Lenhard B."/>
            <person name="Wells C."/>
            <person name="Kodzius R."/>
            <person name="Shimokawa K."/>
            <person name="Bajic V.B."/>
            <person name="Brenner S.E."/>
            <person name="Batalov S."/>
            <person name="Forrest A.R."/>
            <person name="Zavolan M."/>
            <person name="Davis M.J."/>
            <person name="Wilming L.G."/>
            <person name="Aidinis V."/>
            <person name="Allen J.E."/>
            <person name="Ambesi-Impiombato A."/>
            <person name="Apweiler R."/>
            <person name="Aturaliya R.N."/>
            <person name="Bailey T.L."/>
            <person name="Bansal M."/>
            <person name="Baxter L."/>
            <person name="Beisel K.W."/>
            <person name="Bersano T."/>
            <person name="Bono H."/>
            <person name="Chalk A.M."/>
            <person name="Chiu K.P."/>
            <person name="Choudhary V."/>
            <person name="Christoffels A."/>
            <person name="Clutterbuck D.R."/>
            <person name="Crowe M.L."/>
            <person name="Dalla E."/>
            <person name="Dalrymple B.P."/>
            <person name="de Bono B."/>
            <person name="Della Gatta G."/>
            <person name="di Bernardo D."/>
            <person name="Down T."/>
            <person name="Engstrom P."/>
            <person name="Fagiolini M."/>
            <person name="Faulkner G."/>
            <person name="Fletcher C.F."/>
            <person name="Fukushima T."/>
            <person name="Furuno M."/>
            <person name="Futaki S."/>
            <person name="Gariboldi M."/>
            <person name="Georgii-Hemming P."/>
            <person name="Gingeras T.R."/>
            <person name="Gojobori T."/>
            <person name="Green R.E."/>
            <person name="Gustincich S."/>
            <person name="Harbers M."/>
            <person name="Hayashi Y."/>
            <person name="Hensch T.K."/>
            <person name="Hirokawa N."/>
            <person name="Hill D."/>
            <person name="Huminiecki L."/>
            <person name="Iacono M."/>
            <person name="Ikeo K."/>
            <person name="Iwama A."/>
            <person name="Ishikawa T."/>
            <person name="Jakt M."/>
            <person name="Kanapin A."/>
            <person name="Katoh M."/>
            <person name="Kawasawa Y."/>
            <person name="Kelso J."/>
            <person name="Kitamura H."/>
            <person name="Kitano H."/>
            <person name="Kollias G."/>
            <person name="Krishnan S.P."/>
            <person name="Kruger A."/>
            <person name="Kummerfeld S.K."/>
            <person name="Kurochkin I.V."/>
            <person name="Lareau L.F."/>
            <person name="Lazarevic D."/>
            <person name="Lipovich L."/>
            <person name="Liu J."/>
            <person name="Liuni S."/>
            <person name="McWilliam S."/>
            <person name="Madan Babu M."/>
            <person name="Madera M."/>
            <person name="Marchionni L."/>
            <person name="Matsuda H."/>
            <person name="Matsuzawa S."/>
            <person name="Miki H."/>
            <person name="Mignone F."/>
            <person name="Miyake S."/>
            <person name="Morris K."/>
            <person name="Mottagui-Tabar S."/>
            <person name="Mulder N."/>
            <person name="Nakano N."/>
            <person name="Nakauchi H."/>
            <person name="Ng P."/>
            <person name="Nilsson R."/>
            <person name="Nishiguchi S."/>
            <person name="Nishikawa S."/>
            <person name="Nori F."/>
            <person name="Ohara O."/>
            <person name="Okazaki Y."/>
            <person name="Orlando V."/>
            <person name="Pang K.C."/>
            <person name="Pavan W.J."/>
            <person name="Pavesi G."/>
            <person name="Pesole G."/>
            <person name="Petrovsky N."/>
            <person name="Piazza S."/>
            <person name="Reed J."/>
            <person name="Reid J.F."/>
            <person name="Ring B.Z."/>
            <person name="Ringwald M."/>
            <person name="Rost B."/>
            <person name="Ruan Y."/>
            <person name="Salzberg S.L."/>
            <person name="Sandelin A."/>
            <person name="Schneider C."/>
            <person name="Schoenbach C."/>
            <person name="Sekiguchi K."/>
            <person name="Semple C.A."/>
            <person name="Seno S."/>
            <person name="Sessa L."/>
            <person name="Sheng Y."/>
            <person name="Shibata Y."/>
            <person name="Shimada H."/>
            <person name="Shimada K."/>
            <person name="Silva D."/>
            <person name="Sinclair B."/>
            <person name="Sperling S."/>
            <person name="Stupka E."/>
            <person name="Sugiura K."/>
            <person name="Sultana R."/>
            <person name="Takenaka Y."/>
            <person name="Taki K."/>
            <person name="Tammoja K."/>
            <person name="Tan S.L."/>
            <person name="Tang S."/>
            <person name="Taylor M.S."/>
            <person name="Tegner J."/>
            <person name="Teichmann S.A."/>
            <person name="Ueda H.R."/>
            <person name="van Nimwegen E."/>
            <person name="Verardo R."/>
            <person name="Wei C.L."/>
            <person name="Yagi K."/>
            <person name="Yamanishi H."/>
            <person name="Zabarovsky E."/>
            <person name="Zhu S."/>
            <person name="Zimmer A."/>
            <person name="Hide W."/>
            <person name="Bult C."/>
            <person name="Grimmond S.M."/>
            <person name="Teasdale R.D."/>
            <person name="Liu E.T."/>
            <person name="Brusic V."/>
            <person name="Quackenbush J."/>
            <person name="Wahlestedt C."/>
            <person name="Mattick J.S."/>
            <person name="Hume D.A."/>
            <person name="Kai C."/>
            <person name="Sasaki D."/>
            <person name="Tomaru Y."/>
            <person name="Fukuda S."/>
            <person name="Kanamori-Katayama M."/>
            <person name="Suzuki M."/>
            <person name="Aoki J."/>
            <person name="Arakawa T."/>
            <person name="Iida J."/>
            <person name="Imamura K."/>
            <person name="Itoh M."/>
            <person name="Kato T."/>
            <person name="Kawaji H."/>
            <person name="Kawagashira N."/>
            <person name="Kawashima T."/>
            <person name="Kojima M."/>
            <person name="Kondo S."/>
            <person name="Konno H."/>
            <person name="Nakano K."/>
            <person name="Ninomiya N."/>
            <person name="Nishio T."/>
            <person name="Okada M."/>
            <person name="Plessy C."/>
            <person name="Shibata K."/>
            <person name="Shiraki T."/>
            <person name="Suzuki S."/>
            <person name="Tagami M."/>
            <person name="Waki K."/>
            <person name="Watahiki A."/>
            <person name="Okamura-Oho Y."/>
            <person name="Suzuki H."/>
            <person name="Kawai J."/>
            <person name="Hayashizaki Y."/>
        </authorList>
    </citation>
    <scope>NUCLEOTIDE SEQUENCE [LARGE SCALE MRNA]</scope>
    <source>
        <strain>C57BL/6J</strain>
        <tissue>Embryo</tissue>
        <tissue>Kidney</tissue>
        <tissue>Pancreas</tissue>
    </source>
</reference>
<reference key="3">
    <citation type="journal article" date="2004" name="Genome Res.">
        <title>The status, quality, and expansion of the NIH full-length cDNA project: the Mammalian Gene Collection (MGC).</title>
        <authorList>
            <consortium name="The MGC Project Team"/>
        </authorList>
    </citation>
    <scope>NUCLEOTIDE SEQUENCE [LARGE SCALE MRNA]</scope>
    <source>
        <strain>C57BL/6J</strain>
        <tissue>Mammary gland</tissue>
    </source>
</reference>
<reference key="4">
    <citation type="journal article" date="2006" name="J. Cell. Physiol.">
        <title>Integrin cytoplasmic domain-associated protein-1 (ICAP-1) interacts with the ROCK-I kinase at the plasma membrane.</title>
        <authorList>
            <person name="Stroeken P.J."/>
            <person name="Alvarez B."/>
            <person name="Van Rheenen J."/>
            <person name="Wijnands Y.M."/>
            <person name="Geerts D."/>
            <person name="Jalink K."/>
            <person name="Roos E."/>
        </authorList>
    </citation>
    <scope>FUNCTION</scope>
    <scope>INTERACTION WITH ROCK1</scope>
    <scope>SUBCELLULAR LOCATION</scope>
</reference>
<reference key="5">
    <citation type="journal article" date="2007" name="Development">
        <title>Defective osteoblast function in ICAP-1-deficient mice.</title>
        <authorList>
            <person name="Bouvard D."/>
            <person name="Aszodi A."/>
            <person name="Kostka G."/>
            <person name="Block M.R."/>
            <person name="Albiges-Rizo C."/>
            <person name="Fassler R."/>
        </authorList>
    </citation>
    <scope>FUNCTION</scope>
    <scope>DISRUPTION PHENOTYPE</scope>
</reference>
<reference key="6">
    <citation type="journal article" date="2008" name="J. Cell Biol.">
        <title>Cell adaptive response to extracellular matrix density is controlled by ICAP-1-dependent beta1-integrin affinity.</title>
        <authorList>
            <person name="Millon-Fremillon A."/>
            <person name="Bouvard D."/>
            <person name="Grichine A."/>
            <person name="Manet-Dupe S."/>
            <person name="Block M.R."/>
            <person name="Albiges-Rizo C."/>
        </authorList>
    </citation>
    <scope>FUNCTION</scope>
</reference>
<reference key="7">
    <citation type="journal article" date="2008" name="J. Cell. Physiol.">
        <title>Integrin Cytoplasmic domain-Associated Protein-1 (ICAP-1) promotes migration of myoblasts and affects focal adhesions.</title>
        <authorList>
            <person name="Alvarez B."/>
            <person name="Stroeken P.J."/>
            <person name="Edel M.J."/>
            <person name="Roos E."/>
        </authorList>
    </citation>
    <scope>FUNCTION</scope>
    <scope>INTERACTION WITH ROCK1</scope>
</reference>
<reference key="8">
    <citation type="journal article" date="2010" name="Cell">
        <title>A tissue-specific atlas of mouse protein phosphorylation and expression.</title>
        <authorList>
            <person name="Huttlin E.L."/>
            <person name="Jedrychowski M.P."/>
            <person name="Elias J.E."/>
            <person name="Goswami T."/>
            <person name="Rad R."/>
            <person name="Beausoleil S.A."/>
            <person name="Villen J."/>
            <person name="Haas W."/>
            <person name="Sowa M.E."/>
            <person name="Gygi S.P."/>
        </authorList>
    </citation>
    <scope>PHOSPHORYLATION [LARGE SCALE ANALYSIS] AT SER-41</scope>
    <scope>IDENTIFICATION BY MASS SPECTROMETRY [LARGE SCALE ANALYSIS]</scope>
    <source>
        <tissue>Brain</tissue>
        <tissue>Lung</tissue>
        <tissue>Spleen</tissue>
        <tissue>Testis</tissue>
    </source>
</reference>
<reference key="9">
    <citation type="journal article" date="2011" name="J. Cell Biol.">
        <title>Osteoblast mineralization requires beta1 integrin/ICAP-1-dependent fibronectin deposition.</title>
        <authorList>
            <person name="Brunner M."/>
            <person name="Millon-Fremillon A."/>
            <person name="Chevalier G."/>
            <person name="Nakchbandi I.A."/>
            <person name="Mosher D."/>
            <person name="Block M.R."/>
            <person name="Albiges-Rizo C."/>
            <person name="Bouvard D."/>
        </authorList>
    </citation>
    <scope>FUNCTION</scope>
</reference>
<organism>
    <name type="scientific">Mus musculus</name>
    <name type="common">Mouse</name>
    <dbReference type="NCBI Taxonomy" id="10090"/>
    <lineage>
        <taxon>Eukaryota</taxon>
        <taxon>Metazoa</taxon>
        <taxon>Chordata</taxon>
        <taxon>Craniata</taxon>
        <taxon>Vertebrata</taxon>
        <taxon>Euteleostomi</taxon>
        <taxon>Mammalia</taxon>
        <taxon>Eutheria</taxon>
        <taxon>Euarchontoglires</taxon>
        <taxon>Glires</taxon>
        <taxon>Rodentia</taxon>
        <taxon>Myomorpha</taxon>
        <taxon>Muroidea</taxon>
        <taxon>Muridae</taxon>
        <taxon>Murinae</taxon>
        <taxon>Mus</taxon>
        <taxon>Mus</taxon>
    </lineage>
</organism>
<keyword id="KW-0037">Angiogenesis</keyword>
<keyword id="KW-0091">Biomineralization</keyword>
<keyword id="KW-0130">Cell adhesion</keyword>
<keyword id="KW-1003">Cell membrane</keyword>
<keyword id="KW-0966">Cell projection</keyword>
<keyword id="KW-0963">Cytoplasm</keyword>
<keyword id="KW-0206">Cytoskeleton</keyword>
<keyword id="KW-0221">Differentiation</keyword>
<keyword id="KW-0472">Membrane</keyword>
<keyword id="KW-0497">Mitogen</keyword>
<keyword id="KW-0914">Notch signaling pathway</keyword>
<keyword id="KW-0539">Nucleus</keyword>
<keyword id="KW-0597">Phosphoprotein</keyword>
<keyword id="KW-1185">Reference proteome</keyword>
<keyword id="KW-0804">Transcription</keyword>
<keyword id="KW-0805">Transcription regulation</keyword>
<comment type="function">
    <text evidence="4 5 6 7 8">Key regulator of the integrin-mediated cell-matrix interaction signaling by binding to the ITGB1 cytoplasmic tail and preventing the activation of integrin alpha-5/beta-1 (heterodimer of ITGA5 and ITGB1) by talin or FERMT1. Plays a role in cell proliferation, differentiation, spreading, adhesion and migration in the context of mineralization and bone development and angiogenesis. Stimulates cellular proliferation in a fibronectin-dependent manner. Involved in the regulation of beta-1 integrin-containing focal adhesion (FA) site dynamics by controlling its assembly rate during cell adhesion; inhibits beta-1 integrin clustering within FA by directly competing with talin TLN1, and hence stimulates osteoblast spreading and migration in a fibronectin- and/or collagen-dependent manner. Acts as a guanine nucleotide dissociation inhibitor (GDI) by regulating Rho family GTPases during integrin-mediated cell matrix adhesion; reduces the level of active GTP-bound form of both CDC42 and RAC1 GTPases upon cell adhesion to fibronectin. Stimulates the release of active CDC42 from the membranes to maintain it in an inactive cytoplasmic pool. Participates in the translocation of the Rho-associated protein kinase ROCK1 to membrane ruffles at cell leading edges of the cell membrane, leading to an increase of myoblast cell migration on laminin. Plays a role in bone mineralization at a late stage of osteoblast differentiation; modulates the dynamic formation of focal adhesions into fibrillar adhesions, which are adhesive structures responsible for fibronectin deposition and fibrillogenesis. Plays a role in blood vessel development; acts as a negative regulator of angiogenesis by attenuating endothelial cell proliferation and migration, lumen formation and sprouting angiogenesis by promoting AKT phosphorylation and inhibiting ERK1/2 phosphorylation through activation of the Notch signaling pathway. Promotes transcriptional activity of the MYC promoter.</text>
</comment>
<comment type="subunit">
    <text evidence="1 4 6">Found in a complex, at least composed of ITGB1BP1, KRIT1 and RAP1A. Interacts (via C-terminal region) with ITGB1 (via C-terminal cytoplasmic tail); the interaction prevents talin TLN1 binding to ITGB1 and KRIT1 and ITGB1 compete for the same binding site. Interacts with KRIT1 (via N-terminal NPXY motif); the interaction induces the opening conformation of KRIT1 and KRIT1 and ITGB1 compete for the same binding site. Isoform 2 does not interact with ITGB1. Interacts with CDC42 (GTP- or GDP-bound form); the interaction is increased with the CDC42-membrane bound forms and prevents both CDC42 activation and cell spreading. Interacts (via C-terminal domain region) with NME2. Interacts with FERMT2 and RAC1 (By similarity). Interacts (via N-terminus and PTB domain) with ROCK1.</text>
</comment>
<comment type="subcellular location">
    <subcellularLocation>
        <location evidence="1">Nucleus</location>
    </subcellularLocation>
    <subcellularLocation>
        <location evidence="1">Cytoplasm</location>
    </subcellularLocation>
    <subcellularLocation>
        <location evidence="4">Cytoplasm</location>
        <location evidence="4">Cytoskeleton</location>
    </subcellularLocation>
    <subcellularLocation>
        <location evidence="4">Cell membrane</location>
    </subcellularLocation>
    <subcellularLocation>
        <location evidence="4">Cell projection</location>
        <location evidence="4">Lamellipodium</location>
    </subcellularLocation>
    <subcellularLocation>
        <location evidence="4">Cell projection</location>
        <location evidence="4">Ruffle</location>
    </subcellularLocation>
    <text evidence="1">Nucleocytoplasmic shuttling protein; shuttles between nucleus and cytoplasm in an integrin-dependent manner; probably sequestered in the cytosol by ITGB1. Its localization is dependent on the stage of cell spreading on fibronectin; cytoplasmic in case of round cells, corresponding to the initial step of cell spreading, or nuclear in case of well spread cells. Colocalizes with ROCK1 and NME2 at beta-1 integrin engagement sites. Together with ITGB1 and NME2 is recruited to beta-1 integrin-rich peripheral ruffles and lamellipodia during initial cell spreading on fibronectin and/or collagen (By similarity).</text>
</comment>
<comment type="tissue specificity">
    <text>Expressed in the brain.</text>
</comment>
<comment type="developmental stage">
    <text>First expressed in the heart primordium at 8.5 dpc.</text>
</comment>
<comment type="PTM">
    <text evidence="1">Phosphorylation at Thr-38 seems to enhance integrin alpha5beta1-mediated cell adhesion. The degree of phosphorylation is regulated by integrin-dependent cell-matrix interaction (By similarity).</text>
</comment>
<comment type="disruption phenotype">
    <text evidence="5">Mice show severe defects in osteoblast mesenchymal cells to compaction, proliferation, differentiation, and mineralization and to a delay in bone nodule formation. Suffer also from an excessive microvessel growth.</text>
</comment>
<dbReference type="EMBL" id="AJ001373">
    <property type="protein sequence ID" value="CAA04706.1"/>
    <property type="molecule type" value="mRNA"/>
</dbReference>
<dbReference type="EMBL" id="AK002786">
    <property type="protein sequence ID" value="BAB22357.1"/>
    <property type="molecule type" value="mRNA"/>
</dbReference>
<dbReference type="EMBL" id="AK004172">
    <property type="protein sequence ID" value="BAB23206.1"/>
    <property type="molecule type" value="mRNA"/>
</dbReference>
<dbReference type="EMBL" id="AK007635">
    <property type="protein sequence ID" value="BAB25151.1"/>
    <property type="molecule type" value="mRNA"/>
</dbReference>
<dbReference type="EMBL" id="AK075577">
    <property type="protein sequence ID" value="BAC35832.1"/>
    <property type="molecule type" value="mRNA"/>
</dbReference>
<dbReference type="EMBL" id="AK089937">
    <property type="protein sequence ID" value="BAC41007.1"/>
    <property type="molecule type" value="mRNA"/>
</dbReference>
<dbReference type="EMBL" id="BC028772">
    <property type="protein sequence ID" value="AAH28772.1"/>
    <property type="molecule type" value="mRNA"/>
</dbReference>
<dbReference type="CCDS" id="CCDS25833.1"/>
<dbReference type="RefSeq" id="NP_001342538.1">
    <property type="nucleotide sequence ID" value="NM_001355609.1"/>
</dbReference>
<dbReference type="RefSeq" id="NP_032429.1">
    <property type="nucleotide sequence ID" value="NM_008403.5"/>
</dbReference>
<dbReference type="RefSeq" id="XP_006515054.1">
    <property type="nucleotide sequence ID" value="XM_006514991.3"/>
</dbReference>
<dbReference type="SMR" id="O35671"/>
<dbReference type="BioGRID" id="200827">
    <property type="interactions" value="1"/>
</dbReference>
<dbReference type="FunCoup" id="O35671">
    <property type="interactions" value="2316"/>
</dbReference>
<dbReference type="IntAct" id="O35671">
    <property type="interactions" value="1"/>
</dbReference>
<dbReference type="MINT" id="O35671"/>
<dbReference type="STRING" id="10090.ENSMUSP00000075609"/>
<dbReference type="iPTMnet" id="O35671"/>
<dbReference type="PhosphoSitePlus" id="O35671"/>
<dbReference type="jPOST" id="O35671"/>
<dbReference type="PaxDb" id="10090-ENSMUSP00000075609"/>
<dbReference type="ProteomicsDB" id="269104"/>
<dbReference type="Pumba" id="O35671"/>
<dbReference type="Antibodypedia" id="26528">
    <property type="antibodies" value="238 antibodies from 28 providers"/>
</dbReference>
<dbReference type="DNASU" id="16413"/>
<dbReference type="Ensembl" id="ENSMUST00000076260.12">
    <property type="protein sequence ID" value="ENSMUSP00000075609.5"/>
    <property type="gene ID" value="ENSMUSG00000062352.16"/>
</dbReference>
<dbReference type="Ensembl" id="ENSMUST00000173729.8">
    <property type="protein sequence ID" value="ENSMUSP00000134627.2"/>
    <property type="gene ID" value="ENSMUSG00000062352.16"/>
</dbReference>
<dbReference type="Ensembl" id="ENSMUST00000232072.2">
    <property type="protein sequence ID" value="ENSMUSP00000156312.2"/>
    <property type="gene ID" value="ENSMUSG00000062352.16"/>
</dbReference>
<dbReference type="GeneID" id="16413"/>
<dbReference type="KEGG" id="mmu:16413"/>
<dbReference type="UCSC" id="uc007ndl.1">
    <property type="organism name" value="mouse"/>
</dbReference>
<dbReference type="AGR" id="MGI:1306802"/>
<dbReference type="CTD" id="9270"/>
<dbReference type="MGI" id="MGI:1306802">
    <property type="gene designation" value="Itgb1bp1"/>
</dbReference>
<dbReference type="VEuPathDB" id="HostDB:ENSMUSG00000062352"/>
<dbReference type="eggNOG" id="ENOG502QS6V">
    <property type="taxonomic scope" value="Eukaryota"/>
</dbReference>
<dbReference type="GeneTree" id="ENSGT00390000003990"/>
<dbReference type="HOGENOM" id="CLU_117247_0_0_1"/>
<dbReference type="InParanoid" id="O35671"/>
<dbReference type="OMA" id="QCSIWVY"/>
<dbReference type="OrthoDB" id="10060702at2759"/>
<dbReference type="PhylomeDB" id="O35671"/>
<dbReference type="TreeFam" id="TF105393"/>
<dbReference type="BioGRID-ORCS" id="16413">
    <property type="hits" value="5 hits in 81 CRISPR screens"/>
</dbReference>
<dbReference type="ChiTaRS" id="Itgb1bp1">
    <property type="organism name" value="mouse"/>
</dbReference>
<dbReference type="PRO" id="PR:O35671"/>
<dbReference type="Proteomes" id="UP000000589">
    <property type="component" value="Chromosome 12"/>
</dbReference>
<dbReference type="RNAct" id="O35671">
    <property type="molecule type" value="protein"/>
</dbReference>
<dbReference type="Bgee" id="ENSMUSG00000062352">
    <property type="expression patterns" value="Expressed in seminiferous tubule of testis and 262 other cell types or tissues"/>
</dbReference>
<dbReference type="ExpressionAtlas" id="O35671">
    <property type="expression patterns" value="baseline and differential"/>
</dbReference>
<dbReference type="GO" id="GO:0071944">
    <property type="term" value="C:cell periphery"/>
    <property type="evidence" value="ECO:0000250"/>
    <property type="project" value="UniProtKB"/>
</dbReference>
<dbReference type="GO" id="GO:0034451">
    <property type="term" value="C:centriolar satellite"/>
    <property type="evidence" value="ECO:0007669"/>
    <property type="project" value="Ensembl"/>
</dbReference>
<dbReference type="GO" id="GO:0005737">
    <property type="term" value="C:cytoplasm"/>
    <property type="evidence" value="ECO:0000250"/>
    <property type="project" value="UniProtKB"/>
</dbReference>
<dbReference type="GO" id="GO:0005856">
    <property type="term" value="C:cytoskeleton"/>
    <property type="evidence" value="ECO:0000314"/>
    <property type="project" value="UniProtKB"/>
</dbReference>
<dbReference type="GO" id="GO:0005829">
    <property type="term" value="C:cytosol"/>
    <property type="evidence" value="ECO:0000250"/>
    <property type="project" value="HGNC-UCL"/>
</dbReference>
<dbReference type="GO" id="GO:0030027">
    <property type="term" value="C:lamellipodium"/>
    <property type="evidence" value="ECO:0000314"/>
    <property type="project" value="UniProtKB"/>
</dbReference>
<dbReference type="GO" id="GO:0016604">
    <property type="term" value="C:nuclear body"/>
    <property type="evidence" value="ECO:0007669"/>
    <property type="project" value="Ensembl"/>
</dbReference>
<dbReference type="GO" id="GO:0005634">
    <property type="term" value="C:nucleus"/>
    <property type="evidence" value="ECO:0000250"/>
    <property type="project" value="UniProtKB"/>
</dbReference>
<dbReference type="GO" id="GO:0048471">
    <property type="term" value="C:perinuclear region of cytoplasm"/>
    <property type="evidence" value="ECO:0000250"/>
    <property type="project" value="UniProtKB"/>
</dbReference>
<dbReference type="GO" id="GO:0005886">
    <property type="term" value="C:plasma membrane"/>
    <property type="evidence" value="ECO:0000314"/>
    <property type="project" value="UniProtKB"/>
</dbReference>
<dbReference type="GO" id="GO:0001726">
    <property type="term" value="C:ruffle"/>
    <property type="evidence" value="ECO:0000314"/>
    <property type="project" value="UniProtKB"/>
</dbReference>
<dbReference type="GO" id="GO:0005092">
    <property type="term" value="F:GDP-dissociation inhibitor activity"/>
    <property type="evidence" value="ECO:0000250"/>
    <property type="project" value="UniProtKB"/>
</dbReference>
<dbReference type="GO" id="GO:0005178">
    <property type="term" value="F:integrin binding"/>
    <property type="evidence" value="ECO:0000266"/>
    <property type="project" value="MGI"/>
</dbReference>
<dbReference type="GO" id="GO:0019900">
    <property type="term" value="F:kinase binding"/>
    <property type="evidence" value="ECO:0000353"/>
    <property type="project" value="UniProtKB"/>
</dbReference>
<dbReference type="GO" id="GO:0019901">
    <property type="term" value="F:protein kinase binding"/>
    <property type="evidence" value="ECO:0000314"/>
    <property type="project" value="UniProtKB"/>
</dbReference>
<dbReference type="GO" id="GO:0032148">
    <property type="term" value="P:activation of protein kinase B activity"/>
    <property type="evidence" value="ECO:0000250"/>
    <property type="project" value="UniProtKB"/>
</dbReference>
<dbReference type="GO" id="GO:0031214">
    <property type="term" value="P:biomineral tissue development"/>
    <property type="evidence" value="ECO:0007669"/>
    <property type="project" value="UniProtKB-KW"/>
</dbReference>
<dbReference type="GO" id="GO:0097746">
    <property type="term" value="P:blood vessel diameter maintenance"/>
    <property type="evidence" value="ECO:0000250"/>
    <property type="project" value="UniProtKB"/>
</dbReference>
<dbReference type="GO" id="GO:0002043">
    <property type="term" value="P:blood vessel endothelial cell proliferation involved in sprouting angiogenesis"/>
    <property type="evidence" value="ECO:0000250"/>
    <property type="project" value="UniProtKB"/>
</dbReference>
<dbReference type="GO" id="GO:0030154">
    <property type="term" value="P:cell differentiation"/>
    <property type="evidence" value="ECO:0007669"/>
    <property type="project" value="UniProtKB-KW"/>
</dbReference>
<dbReference type="GO" id="GO:0007160">
    <property type="term" value="P:cell-matrix adhesion"/>
    <property type="evidence" value="ECO:0000250"/>
    <property type="project" value="HGNC-UCL"/>
</dbReference>
<dbReference type="GO" id="GO:0044344">
    <property type="term" value="P:cellular response to fibroblast growth factor stimulus"/>
    <property type="evidence" value="ECO:0000250"/>
    <property type="project" value="UniProtKB"/>
</dbReference>
<dbReference type="GO" id="GO:0035924">
    <property type="term" value="P:cellular response to vascular endothelial growth factor stimulus"/>
    <property type="evidence" value="ECO:0000250"/>
    <property type="project" value="UniProtKB"/>
</dbReference>
<dbReference type="GO" id="GO:0033622">
    <property type="term" value="P:integrin activation"/>
    <property type="evidence" value="ECO:0000314"/>
    <property type="project" value="UniProtKB"/>
</dbReference>
<dbReference type="GO" id="GO:0007229">
    <property type="term" value="P:integrin-mediated signaling pathway"/>
    <property type="evidence" value="ECO:0000250"/>
    <property type="project" value="UniProtKB"/>
</dbReference>
<dbReference type="GO" id="GO:0051451">
    <property type="term" value="P:myoblast migration"/>
    <property type="evidence" value="ECO:0000315"/>
    <property type="project" value="UniProtKB"/>
</dbReference>
<dbReference type="GO" id="GO:0006933">
    <property type="term" value="P:negative regulation of cell adhesion involved in substrate-bound cell migration"/>
    <property type="evidence" value="ECO:0000314"/>
    <property type="project" value="UniProtKB"/>
</dbReference>
<dbReference type="GO" id="GO:0090051">
    <property type="term" value="P:negative regulation of cell migration involved in sprouting angiogenesis"/>
    <property type="evidence" value="ECO:0000250"/>
    <property type="project" value="UniProtKB"/>
</dbReference>
<dbReference type="GO" id="GO:0008285">
    <property type="term" value="P:negative regulation of cell population proliferation"/>
    <property type="evidence" value="ECO:0000250"/>
    <property type="project" value="UniProtKB"/>
</dbReference>
<dbReference type="GO" id="GO:0070373">
    <property type="term" value="P:negative regulation of ERK1 and ERK2 cascade"/>
    <property type="evidence" value="ECO:0000250"/>
    <property type="project" value="UniProtKB"/>
</dbReference>
<dbReference type="GO" id="GO:0010764">
    <property type="term" value="P:negative regulation of fibroblast migration"/>
    <property type="evidence" value="ECO:0000314"/>
    <property type="project" value="UniProtKB"/>
</dbReference>
<dbReference type="GO" id="GO:0051895">
    <property type="term" value="P:negative regulation of focal adhesion assembly"/>
    <property type="evidence" value="ECO:0000315"/>
    <property type="project" value="UniProtKB"/>
</dbReference>
<dbReference type="GO" id="GO:0032091">
    <property type="term" value="P:negative regulation of protein binding"/>
    <property type="evidence" value="ECO:0000250"/>
    <property type="project" value="UniProtKB"/>
</dbReference>
<dbReference type="GO" id="GO:0006469">
    <property type="term" value="P:negative regulation of protein kinase activity"/>
    <property type="evidence" value="ECO:0000250"/>
    <property type="project" value="UniProtKB"/>
</dbReference>
<dbReference type="GO" id="GO:0090315">
    <property type="term" value="P:negative regulation of protein targeting to membrane"/>
    <property type="evidence" value="ECO:0000250"/>
    <property type="project" value="UniProtKB"/>
</dbReference>
<dbReference type="GO" id="GO:1900025">
    <property type="term" value="P:negative regulation of substrate adhesion-dependent cell spreading"/>
    <property type="evidence" value="ECO:0000314"/>
    <property type="project" value="UniProtKB"/>
</dbReference>
<dbReference type="GO" id="GO:0007219">
    <property type="term" value="P:Notch signaling pathway"/>
    <property type="evidence" value="ECO:0007669"/>
    <property type="project" value="UniProtKB-KW"/>
</dbReference>
<dbReference type="GO" id="GO:0051781">
    <property type="term" value="P:positive regulation of cell division"/>
    <property type="evidence" value="ECO:0007669"/>
    <property type="project" value="UniProtKB-KW"/>
</dbReference>
<dbReference type="GO" id="GO:0008284">
    <property type="term" value="P:positive regulation of cell population proliferation"/>
    <property type="evidence" value="ECO:0000250"/>
    <property type="project" value="UniProtKB"/>
</dbReference>
<dbReference type="GO" id="GO:0010595">
    <property type="term" value="P:positive regulation of endothelial cell migration"/>
    <property type="evidence" value="ECO:0000250"/>
    <property type="project" value="UniProtKB"/>
</dbReference>
<dbReference type="GO" id="GO:0051894">
    <property type="term" value="P:positive regulation of focal adhesion assembly"/>
    <property type="evidence" value="ECO:0000314"/>
    <property type="project" value="UniProtKB"/>
</dbReference>
<dbReference type="GO" id="GO:0045747">
    <property type="term" value="P:positive regulation of Notch signaling pathway"/>
    <property type="evidence" value="ECO:0000250"/>
    <property type="project" value="UniProtKB"/>
</dbReference>
<dbReference type="GO" id="GO:0051897">
    <property type="term" value="P:positive regulation of phosphatidylinositol 3-kinase/protein kinase B signal transduction"/>
    <property type="evidence" value="ECO:0000250"/>
    <property type="project" value="UniProtKB"/>
</dbReference>
<dbReference type="GO" id="GO:0090314">
    <property type="term" value="P:positive regulation of protein targeting to membrane"/>
    <property type="evidence" value="ECO:0000314"/>
    <property type="project" value="UniProtKB"/>
</dbReference>
<dbReference type="GO" id="GO:0051496">
    <property type="term" value="P:positive regulation of stress fiber assembly"/>
    <property type="evidence" value="ECO:0000314"/>
    <property type="project" value="UniProtKB"/>
</dbReference>
<dbReference type="GO" id="GO:0045944">
    <property type="term" value="P:positive regulation of transcription by RNA polymerase II"/>
    <property type="evidence" value="ECO:0000250"/>
    <property type="project" value="UniProtKB"/>
</dbReference>
<dbReference type="GO" id="GO:0072659">
    <property type="term" value="P:protein localization to plasma membrane"/>
    <property type="evidence" value="ECO:0000250"/>
    <property type="project" value="UniProtKB"/>
</dbReference>
<dbReference type="GO" id="GO:0043113">
    <property type="term" value="P:receptor clustering"/>
    <property type="evidence" value="ECO:0000314"/>
    <property type="project" value="UniProtKB"/>
</dbReference>
<dbReference type="GO" id="GO:0030155">
    <property type="term" value="P:regulation of cell adhesion"/>
    <property type="evidence" value="ECO:0000266"/>
    <property type="project" value="MGI"/>
</dbReference>
<dbReference type="GO" id="GO:0033628">
    <property type="term" value="P:regulation of cell adhesion mediated by integrin"/>
    <property type="evidence" value="ECO:0000315"/>
    <property type="project" value="UniProtKB"/>
</dbReference>
<dbReference type="GO" id="GO:0043087">
    <property type="term" value="P:regulation of GTPase activity"/>
    <property type="evidence" value="ECO:0000250"/>
    <property type="project" value="UniProtKB"/>
</dbReference>
<dbReference type="GO" id="GO:2001044">
    <property type="term" value="P:regulation of integrin-mediated signaling pathway"/>
    <property type="evidence" value="ECO:0000314"/>
    <property type="project" value="UniProtKB"/>
</dbReference>
<dbReference type="GO" id="GO:0035148">
    <property type="term" value="P:tube formation"/>
    <property type="evidence" value="ECO:0000250"/>
    <property type="project" value="UniProtKB"/>
</dbReference>
<dbReference type="CDD" id="cd13163">
    <property type="entry name" value="PTB_ICAP1"/>
    <property type="match status" value="1"/>
</dbReference>
<dbReference type="FunFam" id="2.30.29.30:FF:000716">
    <property type="entry name" value="Integrin beta-1-binding protein 1"/>
    <property type="match status" value="1"/>
</dbReference>
<dbReference type="Gene3D" id="6.20.360.10">
    <property type="match status" value="1"/>
</dbReference>
<dbReference type="InterPro" id="IPR019517">
    <property type="entry name" value="Integrin-bd_ICAP-1"/>
</dbReference>
<dbReference type="InterPro" id="IPR006020">
    <property type="entry name" value="PTB/PI_dom"/>
</dbReference>
<dbReference type="PANTHER" id="PTHR32055">
    <property type="entry name" value="INTEGRIN BETA-1-BINDING PROTEIN 1"/>
    <property type="match status" value="1"/>
</dbReference>
<dbReference type="PANTHER" id="PTHR32055:SF1">
    <property type="entry name" value="INTEGRIN BETA-1-BINDING PROTEIN 1"/>
    <property type="match status" value="1"/>
</dbReference>
<dbReference type="Pfam" id="PF10480">
    <property type="entry name" value="ICAP-1_inte_bdg"/>
    <property type="match status" value="1"/>
</dbReference>
<dbReference type="SMART" id="SM00462">
    <property type="entry name" value="PTB"/>
    <property type="match status" value="1"/>
</dbReference>
<dbReference type="SUPFAM" id="SSF50729">
    <property type="entry name" value="PH domain-like"/>
    <property type="match status" value="1"/>
</dbReference>
<feature type="chain" id="PRO_0000084265" description="Integrin beta-1-binding protein 1">
    <location>
        <begin position="1"/>
        <end position="200"/>
    </location>
</feature>
<feature type="domain" description="PID">
    <location>
        <begin position="58"/>
        <end position="200"/>
    </location>
</feature>
<feature type="region of interest" description="Disordered" evidence="3">
    <location>
        <begin position="1"/>
        <end position="55"/>
    </location>
</feature>
<feature type="region of interest" description="Interaction with KRIT1" evidence="1">
    <location>
        <begin position="136"/>
        <end position="139"/>
    </location>
</feature>
<feature type="region of interest" description="Interaction with ITGB1" evidence="1">
    <location>
        <begin position="139"/>
        <end position="141"/>
    </location>
</feature>
<feature type="short sequence motif" description="Nuclear localization signal" evidence="1">
    <location>
        <begin position="6"/>
        <end position="7"/>
    </location>
</feature>
<feature type="compositionally biased region" description="Basic residues" evidence="3">
    <location>
        <begin position="1"/>
        <end position="10"/>
    </location>
</feature>
<feature type="compositionally biased region" description="Low complexity" evidence="3">
    <location>
        <begin position="11"/>
        <end position="29"/>
    </location>
</feature>
<feature type="compositionally biased region" description="Polar residues" evidence="3">
    <location>
        <begin position="34"/>
        <end position="55"/>
    </location>
</feature>
<feature type="modified residue" description="Phosphothreonine; by CaMK2" evidence="2">
    <location>
        <position position="38"/>
    </location>
</feature>
<feature type="modified residue" description="Phosphoserine" evidence="9">
    <location>
        <position position="41"/>
    </location>
</feature>
<gene>
    <name type="primary">Itgb1bp1</name>
</gene>
<proteinExistence type="evidence at protein level"/>
<protein>
    <recommendedName>
        <fullName>Integrin beta-1-binding protein 1</fullName>
    </recommendedName>
    <alternativeName>
        <fullName>Bodenin</fullName>
    </alternativeName>
</protein>
<accession>O35671</accession>
<accession>Q542A8</accession>
<name>ITBP1_MOUSE</name>
<evidence type="ECO:0000250" key="1"/>
<evidence type="ECO:0000250" key="2">
    <source>
        <dbReference type="UniProtKB" id="O14713"/>
    </source>
</evidence>
<evidence type="ECO:0000256" key="3">
    <source>
        <dbReference type="SAM" id="MobiDB-lite"/>
    </source>
</evidence>
<evidence type="ECO:0000269" key="4">
    <source>
    </source>
</evidence>
<evidence type="ECO:0000269" key="5">
    <source>
    </source>
</evidence>
<evidence type="ECO:0000269" key="6">
    <source>
    </source>
</evidence>
<evidence type="ECO:0000269" key="7">
    <source>
    </source>
</evidence>
<evidence type="ECO:0000269" key="8">
    <source>
    </source>
</evidence>
<evidence type="ECO:0007744" key="9">
    <source>
    </source>
</evidence>
<sequence>MFRKGKKRHSSSSSQSSEISTKSKSVDSSLGGLSRSSTVASLDTDSTKSSGQSNSNLDTCAEFRIKYVGAIEKLAVSEGKSLEGPLDLINYIDVAQQDGKLPFVPLEEEFILGVSKYGIKVSTTDQHGVLHRHALYLIIRMVCYDDGLGAGKSLLALKTTDASNEEYSLWVYQCNSLEQAQAICKVLSTAFDSVLTSDKS</sequence>